<comment type="function">
    <text evidence="1">One of the primary rRNA binding proteins, it binds directly to 16S rRNA where it helps nucleate assembly of the platform of the 30S subunit by binding and bridging several RNA helices of the 16S rRNA.</text>
</comment>
<comment type="function">
    <text evidence="1">Forms an intersubunit bridge (bridge B4) with the 23S rRNA of the 50S subunit in the ribosome.</text>
</comment>
<comment type="subunit">
    <text evidence="1">Part of the 30S ribosomal subunit. Forms a bridge to the 50S subunit in the 70S ribosome, contacting the 23S rRNA.</text>
</comment>
<comment type="similarity">
    <text evidence="1">Belongs to the universal ribosomal protein uS15 family.</text>
</comment>
<protein>
    <recommendedName>
        <fullName evidence="1">Small ribosomal subunit protein uS15</fullName>
    </recommendedName>
    <alternativeName>
        <fullName evidence="2">30S ribosomal protein S15</fullName>
    </alternativeName>
</protein>
<gene>
    <name evidence="1" type="primary">rpsO</name>
    <name type="ordered locus">Clos_1533</name>
</gene>
<feature type="chain" id="PRO_1000067684" description="Small ribosomal subunit protein uS15">
    <location>
        <begin position="1"/>
        <end position="87"/>
    </location>
</feature>
<name>RS15_ALKOO</name>
<dbReference type="EMBL" id="CP000853">
    <property type="protein sequence ID" value="ABW19076.1"/>
    <property type="molecule type" value="Genomic_DNA"/>
</dbReference>
<dbReference type="RefSeq" id="WP_012159388.1">
    <property type="nucleotide sequence ID" value="NC_009922.1"/>
</dbReference>
<dbReference type="SMR" id="A8MFB3"/>
<dbReference type="STRING" id="350688.Clos_1533"/>
<dbReference type="KEGG" id="aoe:Clos_1533"/>
<dbReference type="eggNOG" id="COG0184">
    <property type="taxonomic scope" value="Bacteria"/>
</dbReference>
<dbReference type="HOGENOM" id="CLU_148518_0_0_9"/>
<dbReference type="OrthoDB" id="9799262at2"/>
<dbReference type="Proteomes" id="UP000000269">
    <property type="component" value="Chromosome"/>
</dbReference>
<dbReference type="GO" id="GO:0022627">
    <property type="term" value="C:cytosolic small ribosomal subunit"/>
    <property type="evidence" value="ECO:0007669"/>
    <property type="project" value="TreeGrafter"/>
</dbReference>
<dbReference type="GO" id="GO:0019843">
    <property type="term" value="F:rRNA binding"/>
    <property type="evidence" value="ECO:0007669"/>
    <property type="project" value="UniProtKB-UniRule"/>
</dbReference>
<dbReference type="GO" id="GO:0003735">
    <property type="term" value="F:structural constituent of ribosome"/>
    <property type="evidence" value="ECO:0007669"/>
    <property type="project" value="InterPro"/>
</dbReference>
<dbReference type="GO" id="GO:0006412">
    <property type="term" value="P:translation"/>
    <property type="evidence" value="ECO:0007669"/>
    <property type="project" value="UniProtKB-UniRule"/>
</dbReference>
<dbReference type="CDD" id="cd00353">
    <property type="entry name" value="Ribosomal_S15p_S13e"/>
    <property type="match status" value="1"/>
</dbReference>
<dbReference type="FunFam" id="1.10.287.10:FF:000002">
    <property type="entry name" value="30S ribosomal protein S15"/>
    <property type="match status" value="1"/>
</dbReference>
<dbReference type="Gene3D" id="6.10.250.3130">
    <property type="match status" value="1"/>
</dbReference>
<dbReference type="Gene3D" id="1.10.287.10">
    <property type="entry name" value="S15/NS1, RNA-binding"/>
    <property type="match status" value="1"/>
</dbReference>
<dbReference type="HAMAP" id="MF_01343_B">
    <property type="entry name" value="Ribosomal_uS15_B"/>
    <property type="match status" value="1"/>
</dbReference>
<dbReference type="InterPro" id="IPR000589">
    <property type="entry name" value="Ribosomal_uS15"/>
</dbReference>
<dbReference type="InterPro" id="IPR005290">
    <property type="entry name" value="Ribosomal_uS15_bac-type"/>
</dbReference>
<dbReference type="InterPro" id="IPR009068">
    <property type="entry name" value="uS15_NS1_RNA-bd_sf"/>
</dbReference>
<dbReference type="NCBIfam" id="TIGR00952">
    <property type="entry name" value="S15_bact"/>
    <property type="match status" value="1"/>
</dbReference>
<dbReference type="PANTHER" id="PTHR23321">
    <property type="entry name" value="RIBOSOMAL PROTEIN S15, BACTERIAL AND ORGANELLAR"/>
    <property type="match status" value="1"/>
</dbReference>
<dbReference type="PANTHER" id="PTHR23321:SF26">
    <property type="entry name" value="SMALL RIBOSOMAL SUBUNIT PROTEIN US15M"/>
    <property type="match status" value="1"/>
</dbReference>
<dbReference type="Pfam" id="PF00312">
    <property type="entry name" value="Ribosomal_S15"/>
    <property type="match status" value="1"/>
</dbReference>
<dbReference type="SMART" id="SM01387">
    <property type="entry name" value="Ribosomal_S15"/>
    <property type="match status" value="1"/>
</dbReference>
<dbReference type="SUPFAM" id="SSF47060">
    <property type="entry name" value="S15/NS1 RNA-binding domain"/>
    <property type="match status" value="1"/>
</dbReference>
<dbReference type="PROSITE" id="PS00362">
    <property type="entry name" value="RIBOSOMAL_S15"/>
    <property type="match status" value="1"/>
</dbReference>
<evidence type="ECO:0000255" key="1">
    <source>
        <dbReference type="HAMAP-Rule" id="MF_01343"/>
    </source>
</evidence>
<evidence type="ECO:0000305" key="2"/>
<proteinExistence type="inferred from homology"/>
<organism>
    <name type="scientific">Alkaliphilus oremlandii (strain OhILAs)</name>
    <name type="common">Clostridium oremlandii (strain OhILAs)</name>
    <dbReference type="NCBI Taxonomy" id="350688"/>
    <lineage>
        <taxon>Bacteria</taxon>
        <taxon>Bacillati</taxon>
        <taxon>Bacillota</taxon>
        <taxon>Clostridia</taxon>
        <taxon>Peptostreptococcales</taxon>
        <taxon>Natronincolaceae</taxon>
        <taxon>Alkaliphilus</taxon>
    </lineage>
</organism>
<keyword id="KW-1185">Reference proteome</keyword>
<keyword id="KW-0687">Ribonucleoprotein</keyword>
<keyword id="KW-0689">Ribosomal protein</keyword>
<keyword id="KW-0694">RNA-binding</keyword>
<keyword id="KW-0699">rRNA-binding</keyword>
<accession>A8MFB3</accession>
<reference key="1">
    <citation type="submission" date="2007-10" db="EMBL/GenBank/DDBJ databases">
        <title>Complete genome of Alkaliphilus oremlandii OhILAs.</title>
        <authorList>
            <person name="Copeland A."/>
            <person name="Lucas S."/>
            <person name="Lapidus A."/>
            <person name="Barry K."/>
            <person name="Detter J.C."/>
            <person name="Glavina del Rio T."/>
            <person name="Hammon N."/>
            <person name="Israni S."/>
            <person name="Dalin E."/>
            <person name="Tice H."/>
            <person name="Pitluck S."/>
            <person name="Chain P."/>
            <person name="Malfatti S."/>
            <person name="Shin M."/>
            <person name="Vergez L."/>
            <person name="Schmutz J."/>
            <person name="Larimer F."/>
            <person name="Land M."/>
            <person name="Hauser L."/>
            <person name="Kyrpides N."/>
            <person name="Mikhailova N."/>
            <person name="Stolz J.F."/>
            <person name="Dawson A."/>
            <person name="Fisher E."/>
            <person name="Crable B."/>
            <person name="Perera E."/>
            <person name="Lisak J."/>
            <person name="Ranganathan M."/>
            <person name="Basu P."/>
            <person name="Richardson P."/>
        </authorList>
    </citation>
    <scope>NUCLEOTIDE SEQUENCE [LARGE SCALE GENOMIC DNA]</scope>
    <source>
        <strain>OhILAs</strain>
    </source>
</reference>
<sequence length="87" mass="10405">MIQENKKTIIDTFKTHENDTGSPEVQIALLTERINHLNEHLKSHKKDFHSRRGLLKMVGKRRNLLNYLKDRDIERYREIIAKLGLRK</sequence>